<comment type="function">
    <text>Antimicrobial peptide. Active against Gram-positive and Gram-negative bacterial pathogens.</text>
</comment>
<comment type="similarity">
    <text evidence="1">Belongs to the DEFL family. Group II subfamily.</text>
</comment>
<protein>
    <recommendedName>
        <fullName>Defensin D1</fullName>
    </recommendedName>
    <alternativeName>
        <fullName>Antimicrobial peptide D1</fullName>
    </alternativeName>
    <alternativeName>
        <fullName>So-D1</fullName>
    </alternativeName>
</protein>
<feature type="chain" id="PRO_0000074251" description="Defensin D1">
    <location>
        <begin position="1"/>
        <end position="22" status="greater than"/>
    </location>
</feature>
<feature type="non-terminal residue" evidence="1">
    <location>
        <position position="22"/>
    </location>
</feature>
<name>DEFD1_SPIOL</name>
<keyword id="KW-0044">Antibiotic</keyword>
<keyword id="KW-0929">Antimicrobial</keyword>
<keyword id="KW-0903">Direct protein sequencing</keyword>
<keyword id="KW-0295">Fungicide</keyword>
<keyword id="KW-0611">Plant defense</keyword>
<keyword id="KW-1185">Reference proteome</keyword>
<sequence length="22" mass="2408">XTCESPSHKFKGPCATNRNCES</sequence>
<reference evidence="1" key="1">
    <citation type="journal article" date="1998" name="FEBS Lett.">
        <title>Novel defensin subfamily from spinach (Spinacia oleracea).</title>
        <authorList>
            <person name="Segura A."/>
            <person name="Moreno M."/>
            <person name="Molina A."/>
            <person name="Garcia-Olmedo F."/>
        </authorList>
    </citation>
    <scope>PROTEIN SEQUENCE</scope>
    <source>
        <strain>cv. Matador</strain>
        <tissue>Leaf</tissue>
    </source>
</reference>
<organism evidence="1">
    <name type="scientific">Spinacia oleracea</name>
    <name type="common">Spinach</name>
    <dbReference type="NCBI Taxonomy" id="3562"/>
    <lineage>
        <taxon>Eukaryota</taxon>
        <taxon>Viridiplantae</taxon>
        <taxon>Streptophyta</taxon>
        <taxon>Embryophyta</taxon>
        <taxon>Tracheophyta</taxon>
        <taxon>Spermatophyta</taxon>
        <taxon>Magnoliopsida</taxon>
        <taxon>eudicotyledons</taxon>
        <taxon>Gunneridae</taxon>
        <taxon>Pentapetalae</taxon>
        <taxon>Caryophyllales</taxon>
        <taxon>Chenopodiaceae</taxon>
        <taxon>Chenopodioideae</taxon>
        <taxon>Anserineae</taxon>
        <taxon>Spinacia</taxon>
    </lineage>
</organism>
<accession>P81572</accession>
<proteinExistence type="evidence at protein level"/>
<dbReference type="Proteomes" id="UP001155700">
    <property type="component" value="Unplaced"/>
</dbReference>
<dbReference type="GO" id="GO:0042742">
    <property type="term" value="P:defense response to bacterium"/>
    <property type="evidence" value="ECO:0007669"/>
    <property type="project" value="UniProtKB-KW"/>
</dbReference>
<dbReference type="GO" id="GO:0050832">
    <property type="term" value="P:defense response to fungus"/>
    <property type="evidence" value="ECO:0007669"/>
    <property type="project" value="UniProtKB-KW"/>
</dbReference>
<dbReference type="GO" id="GO:0031640">
    <property type="term" value="P:killing of cells of another organism"/>
    <property type="evidence" value="ECO:0007669"/>
    <property type="project" value="UniProtKB-KW"/>
</dbReference>
<dbReference type="Gene3D" id="3.30.30.10">
    <property type="entry name" value="Knottin, scorpion toxin-like"/>
    <property type="match status" value="1"/>
</dbReference>
<dbReference type="InterPro" id="IPR036574">
    <property type="entry name" value="Scorpion_toxin-like_sf"/>
</dbReference>
<dbReference type="Pfam" id="PF00304">
    <property type="entry name" value="Gamma-thionin"/>
    <property type="match status" value="1"/>
</dbReference>
<dbReference type="SUPFAM" id="SSF57095">
    <property type="entry name" value="Scorpion toxin-like"/>
    <property type="match status" value="1"/>
</dbReference>
<evidence type="ECO:0000305" key="1"/>